<sequence length="328" mass="35480">MIEKIWSGESPLWRLLLPLSWLYGLVSGAIRLCYKLKLKRAWRAPVPVVVVGNLTAGGNGKTPVVVWLVEQLQQRGIRVGVVSRGYGGKAESYPLLLSADTTTAQAGDEPVLIYQRTGAPVAVSPVRSDAVKAILAQHPDVQIIVTDDGLQHYRLARDVEIVVIDGVRRFGNGWWLPAGPMRERAGRLKSVDAVIVNGGVPRSGEIPMHLLPGQAVNLRTGTRCDVAQLEHVVAIAGIGHPPRFFATLKMCGVQPEKCVPLADHQSLNHADVSALVSAGQTLVMTEKDAVKCRAFAEENWWYLPVDAQLSGDEPAKLLAQLTSLASGH</sequence>
<protein>
    <recommendedName>
        <fullName evidence="1">Tetraacyldisaccharide 4'-kinase</fullName>
        <ecNumber evidence="1">2.7.1.130</ecNumber>
    </recommendedName>
    <alternativeName>
        <fullName evidence="1">Lipid A 4'-kinase</fullName>
    </alternativeName>
</protein>
<gene>
    <name evidence="1" type="primary">lpxK</name>
    <name type="ordered locus">ECS88_0943</name>
</gene>
<accession>B7MHM4</accession>
<feature type="chain" id="PRO_1000123704" description="Tetraacyldisaccharide 4'-kinase">
    <location>
        <begin position="1"/>
        <end position="328"/>
    </location>
</feature>
<feature type="binding site" evidence="1">
    <location>
        <begin position="55"/>
        <end position="62"/>
    </location>
    <ligand>
        <name>ATP</name>
        <dbReference type="ChEBI" id="CHEBI:30616"/>
    </ligand>
</feature>
<organism>
    <name type="scientific">Escherichia coli O45:K1 (strain S88 / ExPEC)</name>
    <dbReference type="NCBI Taxonomy" id="585035"/>
    <lineage>
        <taxon>Bacteria</taxon>
        <taxon>Pseudomonadati</taxon>
        <taxon>Pseudomonadota</taxon>
        <taxon>Gammaproteobacteria</taxon>
        <taxon>Enterobacterales</taxon>
        <taxon>Enterobacteriaceae</taxon>
        <taxon>Escherichia</taxon>
    </lineage>
</organism>
<name>LPXK_ECO45</name>
<evidence type="ECO:0000255" key="1">
    <source>
        <dbReference type="HAMAP-Rule" id="MF_00409"/>
    </source>
</evidence>
<keyword id="KW-0067">ATP-binding</keyword>
<keyword id="KW-0418">Kinase</keyword>
<keyword id="KW-0441">Lipid A biosynthesis</keyword>
<keyword id="KW-0444">Lipid biosynthesis</keyword>
<keyword id="KW-0443">Lipid metabolism</keyword>
<keyword id="KW-0547">Nucleotide-binding</keyword>
<keyword id="KW-1185">Reference proteome</keyword>
<keyword id="KW-0808">Transferase</keyword>
<dbReference type="EC" id="2.7.1.130" evidence="1"/>
<dbReference type="EMBL" id="CU928161">
    <property type="protein sequence ID" value="CAR02275.1"/>
    <property type="molecule type" value="Genomic_DNA"/>
</dbReference>
<dbReference type="RefSeq" id="WP_000570549.1">
    <property type="nucleotide sequence ID" value="NC_011742.1"/>
</dbReference>
<dbReference type="SMR" id="B7MHM4"/>
<dbReference type="KEGG" id="ecz:ECS88_0943"/>
<dbReference type="HOGENOM" id="CLU_038816_2_0_6"/>
<dbReference type="UniPathway" id="UPA00359">
    <property type="reaction ID" value="UER00482"/>
</dbReference>
<dbReference type="Proteomes" id="UP000000747">
    <property type="component" value="Chromosome"/>
</dbReference>
<dbReference type="GO" id="GO:0005886">
    <property type="term" value="C:plasma membrane"/>
    <property type="evidence" value="ECO:0007669"/>
    <property type="project" value="TreeGrafter"/>
</dbReference>
<dbReference type="GO" id="GO:0005524">
    <property type="term" value="F:ATP binding"/>
    <property type="evidence" value="ECO:0007669"/>
    <property type="project" value="UniProtKB-UniRule"/>
</dbReference>
<dbReference type="GO" id="GO:0009029">
    <property type="term" value="F:tetraacyldisaccharide 4'-kinase activity"/>
    <property type="evidence" value="ECO:0007669"/>
    <property type="project" value="UniProtKB-UniRule"/>
</dbReference>
<dbReference type="GO" id="GO:0009245">
    <property type="term" value="P:lipid A biosynthetic process"/>
    <property type="evidence" value="ECO:0007669"/>
    <property type="project" value="UniProtKB-UniRule"/>
</dbReference>
<dbReference type="GO" id="GO:0009244">
    <property type="term" value="P:lipopolysaccharide core region biosynthetic process"/>
    <property type="evidence" value="ECO:0007669"/>
    <property type="project" value="TreeGrafter"/>
</dbReference>
<dbReference type="HAMAP" id="MF_00409">
    <property type="entry name" value="LpxK"/>
    <property type="match status" value="1"/>
</dbReference>
<dbReference type="InterPro" id="IPR003758">
    <property type="entry name" value="LpxK"/>
</dbReference>
<dbReference type="InterPro" id="IPR027417">
    <property type="entry name" value="P-loop_NTPase"/>
</dbReference>
<dbReference type="NCBIfam" id="TIGR00682">
    <property type="entry name" value="lpxK"/>
    <property type="match status" value="1"/>
</dbReference>
<dbReference type="PANTHER" id="PTHR42724">
    <property type="entry name" value="TETRAACYLDISACCHARIDE 4'-KINASE"/>
    <property type="match status" value="1"/>
</dbReference>
<dbReference type="PANTHER" id="PTHR42724:SF1">
    <property type="entry name" value="TETRAACYLDISACCHARIDE 4'-KINASE, MITOCHONDRIAL-RELATED"/>
    <property type="match status" value="1"/>
</dbReference>
<dbReference type="Pfam" id="PF02606">
    <property type="entry name" value="LpxK"/>
    <property type="match status" value="1"/>
</dbReference>
<dbReference type="SUPFAM" id="SSF52540">
    <property type="entry name" value="P-loop containing nucleoside triphosphate hydrolases"/>
    <property type="match status" value="1"/>
</dbReference>
<comment type="function">
    <text evidence="1">Transfers the gamma-phosphate of ATP to the 4'-position of a tetraacyldisaccharide 1-phosphate intermediate (termed DS-1-P) to form tetraacyldisaccharide 1,4'-bis-phosphate (lipid IVA).</text>
</comment>
<comment type="catalytic activity">
    <reaction evidence="1">
        <text>a lipid A disaccharide + ATP = a lipid IVA + ADP + H(+)</text>
        <dbReference type="Rhea" id="RHEA:67840"/>
        <dbReference type="ChEBI" id="CHEBI:15378"/>
        <dbReference type="ChEBI" id="CHEBI:30616"/>
        <dbReference type="ChEBI" id="CHEBI:176343"/>
        <dbReference type="ChEBI" id="CHEBI:176425"/>
        <dbReference type="ChEBI" id="CHEBI:456216"/>
        <dbReference type="EC" id="2.7.1.130"/>
    </reaction>
</comment>
<comment type="pathway">
    <text evidence="1">Glycolipid biosynthesis; lipid IV(A) biosynthesis; lipid IV(A) from (3R)-3-hydroxytetradecanoyl-[acyl-carrier-protein] and UDP-N-acetyl-alpha-D-glucosamine: step 6/6.</text>
</comment>
<comment type="similarity">
    <text evidence="1">Belongs to the LpxK family.</text>
</comment>
<proteinExistence type="inferred from homology"/>
<reference key="1">
    <citation type="journal article" date="2009" name="PLoS Genet.">
        <title>Organised genome dynamics in the Escherichia coli species results in highly diverse adaptive paths.</title>
        <authorList>
            <person name="Touchon M."/>
            <person name="Hoede C."/>
            <person name="Tenaillon O."/>
            <person name="Barbe V."/>
            <person name="Baeriswyl S."/>
            <person name="Bidet P."/>
            <person name="Bingen E."/>
            <person name="Bonacorsi S."/>
            <person name="Bouchier C."/>
            <person name="Bouvet O."/>
            <person name="Calteau A."/>
            <person name="Chiapello H."/>
            <person name="Clermont O."/>
            <person name="Cruveiller S."/>
            <person name="Danchin A."/>
            <person name="Diard M."/>
            <person name="Dossat C."/>
            <person name="Karoui M.E."/>
            <person name="Frapy E."/>
            <person name="Garry L."/>
            <person name="Ghigo J.M."/>
            <person name="Gilles A.M."/>
            <person name="Johnson J."/>
            <person name="Le Bouguenec C."/>
            <person name="Lescat M."/>
            <person name="Mangenot S."/>
            <person name="Martinez-Jehanne V."/>
            <person name="Matic I."/>
            <person name="Nassif X."/>
            <person name="Oztas S."/>
            <person name="Petit M.A."/>
            <person name="Pichon C."/>
            <person name="Rouy Z."/>
            <person name="Ruf C.S."/>
            <person name="Schneider D."/>
            <person name="Tourret J."/>
            <person name="Vacherie B."/>
            <person name="Vallenet D."/>
            <person name="Medigue C."/>
            <person name="Rocha E.P.C."/>
            <person name="Denamur E."/>
        </authorList>
    </citation>
    <scope>NUCLEOTIDE SEQUENCE [LARGE SCALE GENOMIC DNA]</scope>
    <source>
        <strain>S88 / ExPEC</strain>
    </source>
</reference>